<dbReference type="EC" id="3.6.5.3" evidence="2"/>
<dbReference type="EMBL" id="CP000024">
    <property type="protein sequence ID" value="AAV62086.1"/>
    <property type="molecule type" value="Genomic_DNA"/>
</dbReference>
<dbReference type="RefSeq" id="WP_002949971.1">
    <property type="nucleotide sequence ID" value="NC_006449.1"/>
</dbReference>
<dbReference type="SMR" id="Q5M101"/>
<dbReference type="GeneID" id="66898397"/>
<dbReference type="KEGG" id="stc:str0487"/>
<dbReference type="HOGENOM" id="CLU_007265_0_1_9"/>
<dbReference type="GO" id="GO:0005829">
    <property type="term" value="C:cytosol"/>
    <property type="evidence" value="ECO:0007669"/>
    <property type="project" value="TreeGrafter"/>
</dbReference>
<dbReference type="GO" id="GO:0005525">
    <property type="term" value="F:GTP binding"/>
    <property type="evidence" value="ECO:0007669"/>
    <property type="project" value="UniProtKB-UniRule"/>
</dbReference>
<dbReference type="GO" id="GO:0003924">
    <property type="term" value="F:GTPase activity"/>
    <property type="evidence" value="ECO:0007669"/>
    <property type="project" value="InterPro"/>
</dbReference>
<dbReference type="GO" id="GO:0003746">
    <property type="term" value="F:translation elongation factor activity"/>
    <property type="evidence" value="ECO:0007669"/>
    <property type="project" value="UniProtKB-UniRule"/>
</dbReference>
<dbReference type="CDD" id="cd01884">
    <property type="entry name" value="EF_Tu"/>
    <property type="match status" value="1"/>
</dbReference>
<dbReference type="CDD" id="cd03697">
    <property type="entry name" value="EFTU_II"/>
    <property type="match status" value="1"/>
</dbReference>
<dbReference type="CDD" id="cd03707">
    <property type="entry name" value="EFTU_III"/>
    <property type="match status" value="1"/>
</dbReference>
<dbReference type="FunFam" id="2.40.30.10:FF:000001">
    <property type="entry name" value="Elongation factor Tu"/>
    <property type="match status" value="1"/>
</dbReference>
<dbReference type="FunFam" id="3.40.50.300:FF:000003">
    <property type="entry name" value="Elongation factor Tu"/>
    <property type="match status" value="1"/>
</dbReference>
<dbReference type="Gene3D" id="3.40.50.300">
    <property type="entry name" value="P-loop containing nucleotide triphosphate hydrolases"/>
    <property type="match status" value="1"/>
</dbReference>
<dbReference type="Gene3D" id="2.40.30.10">
    <property type="entry name" value="Translation factors"/>
    <property type="match status" value="2"/>
</dbReference>
<dbReference type="HAMAP" id="MF_00118_B">
    <property type="entry name" value="EF_Tu_B"/>
    <property type="match status" value="1"/>
</dbReference>
<dbReference type="InterPro" id="IPR041709">
    <property type="entry name" value="EF-Tu_GTP-bd"/>
</dbReference>
<dbReference type="InterPro" id="IPR050055">
    <property type="entry name" value="EF-Tu_GTPase"/>
</dbReference>
<dbReference type="InterPro" id="IPR004161">
    <property type="entry name" value="EFTu-like_2"/>
</dbReference>
<dbReference type="InterPro" id="IPR033720">
    <property type="entry name" value="EFTU_2"/>
</dbReference>
<dbReference type="InterPro" id="IPR031157">
    <property type="entry name" value="G_TR_CS"/>
</dbReference>
<dbReference type="InterPro" id="IPR027417">
    <property type="entry name" value="P-loop_NTPase"/>
</dbReference>
<dbReference type="InterPro" id="IPR005225">
    <property type="entry name" value="Small_GTP-bd"/>
</dbReference>
<dbReference type="InterPro" id="IPR000795">
    <property type="entry name" value="T_Tr_GTP-bd_dom"/>
</dbReference>
<dbReference type="InterPro" id="IPR009000">
    <property type="entry name" value="Transl_B-barrel_sf"/>
</dbReference>
<dbReference type="InterPro" id="IPR009001">
    <property type="entry name" value="Transl_elong_EF1A/Init_IF2_C"/>
</dbReference>
<dbReference type="InterPro" id="IPR004541">
    <property type="entry name" value="Transl_elong_EFTu/EF1A_bac/org"/>
</dbReference>
<dbReference type="InterPro" id="IPR004160">
    <property type="entry name" value="Transl_elong_EFTu/EF1A_C"/>
</dbReference>
<dbReference type="NCBIfam" id="TIGR00485">
    <property type="entry name" value="EF-Tu"/>
    <property type="match status" value="1"/>
</dbReference>
<dbReference type="NCBIfam" id="NF000766">
    <property type="entry name" value="PRK00049.1"/>
    <property type="match status" value="1"/>
</dbReference>
<dbReference type="NCBIfam" id="NF009372">
    <property type="entry name" value="PRK12735.1"/>
    <property type="match status" value="1"/>
</dbReference>
<dbReference type="NCBIfam" id="NF009373">
    <property type="entry name" value="PRK12736.1"/>
    <property type="match status" value="1"/>
</dbReference>
<dbReference type="NCBIfam" id="TIGR00231">
    <property type="entry name" value="small_GTP"/>
    <property type="match status" value="1"/>
</dbReference>
<dbReference type="PANTHER" id="PTHR43721:SF22">
    <property type="entry name" value="ELONGATION FACTOR TU, MITOCHONDRIAL"/>
    <property type="match status" value="1"/>
</dbReference>
<dbReference type="PANTHER" id="PTHR43721">
    <property type="entry name" value="ELONGATION FACTOR TU-RELATED"/>
    <property type="match status" value="1"/>
</dbReference>
<dbReference type="Pfam" id="PF00009">
    <property type="entry name" value="GTP_EFTU"/>
    <property type="match status" value="1"/>
</dbReference>
<dbReference type="Pfam" id="PF03144">
    <property type="entry name" value="GTP_EFTU_D2"/>
    <property type="match status" value="1"/>
</dbReference>
<dbReference type="Pfam" id="PF03143">
    <property type="entry name" value="GTP_EFTU_D3"/>
    <property type="match status" value="1"/>
</dbReference>
<dbReference type="PRINTS" id="PR00315">
    <property type="entry name" value="ELONGATNFCT"/>
</dbReference>
<dbReference type="SUPFAM" id="SSF50465">
    <property type="entry name" value="EF-Tu/eEF-1alpha/eIF2-gamma C-terminal domain"/>
    <property type="match status" value="1"/>
</dbReference>
<dbReference type="SUPFAM" id="SSF52540">
    <property type="entry name" value="P-loop containing nucleoside triphosphate hydrolases"/>
    <property type="match status" value="1"/>
</dbReference>
<dbReference type="SUPFAM" id="SSF50447">
    <property type="entry name" value="Translation proteins"/>
    <property type="match status" value="1"/>
</dbReference>
<dbReference type="PROSITE" id="PS00301">
    <property type="entry name" value="G_TR_1"/>
    <property type="match status" value="1"/>
</dbReference>
<dbReference type="PROSITE" id="PS51722">
    <property type="entry name" value="G_TR_2"/>
    <property type="match status" value="1"/>
</dbReference>
<proteinExistence type="inferred from homology"/>
<keyword id="KW-0963">Cytoplasm</keyword>
<keyword id="KW-0251">Elongation factor</keyword>
<keyword id="KW-0342">GTP-binding</keyword>
<keyword id="KW-0378">Hydrolase</keyword>
<keyword id="KW-0460">Magnesium</keyword>
<keyword id="KW-0479">Metal-binding</keyword>
<keyword id="KW-0547">Nucleotide-binding</keyword>
<keyword id="KW-0648">Protein biosynthesis</keyword>
<name>EFTU_STRT1</name>
<comment type="function">
    <text evidence="2">GTP hydrolase that promotes the GTP-dependent binding of aminoacyl-tRNA to the A-site of ribosomes during protein biosynthesis.</text>
</comment>
<comment type="catalytic activity">
    <reaction evidence="2">
        <text>GTP + H2O = GDP + phosphate + H(+)</text>
        <dbReference type="Rhea" id="RHEA:19669"/>
        <dbReference type="ChEBI" id="CHEBI:15377"/>
        <dbReference type="ChEBI" id="CHEBI:15378"/>
        <dbReference type="ChEBI" id="CHEBI:37565"/>
        <dbReference type="ChEBI" id="CHEBI:43474"/>
        <dbReference type="ChEBI" id="CHEBI:58189"/>
        <dbReference type="EC" id="3.6.5.3"/>
    </reaction>
    <physiologicalReaction direction="left-to-right" evidence="2">
        <dbReference type="Rhea" id="RHEA:19670"/>
    </physiologicalReaction>
</comment>
<comment type="subunit">
    <text evidence="2">Monomer.</text>
</comment>
<comment type="subcellular location">
    <subcellularLocation>
        <location evidence="2">Cytoplasm</location>
    </subcellularLocation>
</comment>
<comment type="similarity">
    <text evidence="2">Belongs to the TRAFAC class translation factor GTPase superfamily. Classic translation factor GTPase family. EF-Tu/EF-1A subfamily.</text>
</comment>
<accession>Q5M101</accession>
<gene>
    <name evidence="2" type="primary">tuf</name>
    <name type="ordered locus">str0487</name>
</gene>
<feature type="chain" id="PRO_1000015761" description="Elongation factor Tu">
    <location>
        <begin position="1"/>
        <end position="398"/>
    </location>
</feature>
<feature type="domain" description="tr-type G">
    <location>
        <begin position="10"/>
        <end position="207"/>
    </location>
</feature>
<feature type="region of interest" description="G1" evidence="1">
    <location>
        <begin position="19"/>
        <end position="26"/>
    </location>
</feature>
<feature type="region of interest" description="G2" evidence="1">
    <location>
        <begin position="63"/>
        <end position="67"/>
    </location>
</feature>
<feature type="region of interest" description="G3" evidence="1">
    <location>
        <begin position="84"/>
        <end position="87"/>
    </location>
</feature>
<feature type="region of interest" description="G4" evidence="1">
    <location>
        <begin position="139"/>
        <end position="142"/>
    </location>
</feature>
<feature type="region of interest" description="G5" evidence="1">
    <location>
        <begin position="177"/>
        <end position="179"/>
    </location>
</feature>
<feature type="binding site" evidence="2">
    <location>
        <begin position="19"/>
        <end position="26"/>
    </location>
    <ligand>
        <name>GTP</name>
        <dbReference type="ChEBI" id="CHEBI:37565"/>
    </ligand>
</feature>
<feature type="binding site" evidence="2">
    <location>
        <position position="26"/>
    </location>
    <ligand>
        <name>Mg(2+)</name>
        <dbReference type="ChEBI" id="CHEBI:18420"/>
    </ligand>
</feature>
<feature type="binding site" evidence="2">
    <location>
        <begin position="84"/>
        <end position="88"/>
    </location>
    <ligand>
        <name>GTP</name>
        <dbReference type="ChEBI" id="CHEBI:37565"/>
    </ligand>
</feature>
<feature type="binding site" evidence="2">
    <location>
        <begin position="139"/>
        <end position="142"/>
    </location>
    <ligand>
        <name>GTP</name>
        <dbReference type="ChEBI" id="CHEBI:37565"/>
    </ligand>
</feature>
<reference key="1">
    <citation type="journal article" date="2004" name="Nat. Biotechnol.">
        <title>Complete sequence and comparative genome analysis of the dairy bacterium Streptococcus thermophilus.</title>
        <authorList>
            <person name="Bolotin A."/>
            <person name="Quinquis B."/>
            <person name="Renault P."/>
            <person name="Sorokin A."/>
            <person name="Ehrlich S.D."/>
            <person name="Kulakauskas S."/>
            <person name="Lapidus A."/>
            <person name="Goltsman E."/>
            <person name="Mazur M."/>
            <person name="Pusch G.D."/>
            <person name="Fonstein M."/>
            <person name="Overbeek R."/>
            <person name="Kyprides N."/>
            <person name="Purnelle B."/>
            <person name="Prozzi D."/>
            <person name="Ngui K."/>
            <person name="Masuy D."/>
            <person name="Hancy F."/>
            <person name="Burteau S."/>
            <person name="Boutry M."/>
            <person name="Delcour J."/>
            <person name="Goffeau A."/>
            <person name="Hols P."/>
        </authorList>
    </citation>
    <scope>NUCLEOTIDE SEQUENCE [LARGE SCALE GENOMIC DNA]</scope>
    <source>
        <strain>CNRZ 1066</strain>
    </source>
</reference>
<organism>
    <name type="scientific">Streptococcus thermophilus (strain CNRZ 1066)</name>
    <dbReference type="NCBI Taxonomy" id="299768"/>
    <lineage>
        <taxon>Bacteria</taxon>
        <taxon>Bacillati</taxon>
        <taxon>Bacillota</taxon>
        <taxon>Bacilli</taxon>
        <taxon>Lactobacillales</taxon>
        <taxon>Streptococcaceae</taxon>
        <taxon>Streptococcus</taxon>
    </lineage>
</organism>
<evidence type="ECO:0000250" key="1"/>
<evidence type="ECO:0000255" key="2">
    <source>
        <dbReference type="HAMAP-Rule" id="MF_00118"/>
    </source>
</evidence>
<protein>
    <recommendedName>
        <fullName evidence="2">Elongation factor Tu</fullName>
        <shortName evidence="2">EF-Tu</shortName>
        <ecNumber evidence="2">3.6.5.3</ecNumber>
    </recommendedName>
</protein>
<sequence>MAKEKYDRSKPHVNIGTIGHVDHGKTTLTAAITTVLARRLPSAVNTPKDYASIDAAPEERERGITINTAHVEYETEKRHYAHIDAPGHADYVKNMITGAAQMDGAILVVASTDGPMPQTREHILLSRQVGVKHLIVFMNKVDLVDDEELLELVEMEIRDLLSEYDFPGDDIPVIQGSALKALEGDSKYEDIIMDLMNTVDEYIPEPERDTDKPLLLPVEDVFSITGRGTVASGRIDRGVVRVNDEVEIVGLKEESQKAVVTGVEMFRKQLDEGIAGDNVGVLLRGIQRDEIERGQVLAAPGSIKPHTKFKGEVYILTKEEGGRHTPFFNNYRPQFYFRTTDVTGSIELPAGTEMVMPGDNVTIDVELIHPIAVEKGTTFSIREGGRTVGSGIVTEIEA</sequence>